<organism>
    <name type="scientific">Porphyromonas gingivalis (strain ATCC BAA-308 / W83)</name>
    <dbReference type="NCBI Taxonomy" id="242619"/>
    <lineage>
        <taxon>Bacteria</taxon>
        <taxon>Pseudomonadati</taxon>
        <taxon>Bacteroidota</taxon>
        <taxon>Bacteroidia</taxon>
        <taxon>Bacteroidales</taxon>
        <taxon>Porphyromonadaceae</taxon>
        <taxon>Porphyromonas</taxon>
    </lineage>
</organism>
<evidence type="ECO:0000255" key="1">
    <source>
        <dbReference type="HAMAP-Rule" id="MF_01820"/>
    </source>
</evidence>
<evidence type="ECO:0000255" key="2">
    <source>
        <dbReference type="PROSITE-ProRule" id="PRU01058"/>
    </source>
</evidence>
<gene>
    <name evidence="1" type="primary">rsgA</name>
    <name type="ordered locus">PG_1900</name>
</gene>
<sequence length="315" mass="34551">MDGVVIKNTGSQYLVRCTDGTELYCMAKGNLRLKGIRSTNPVTVGDRVEIVPASQDGQPAYIKRIHPRRNYIIRRASNLSKESHILGANLDAAVLVCTINDPVTTTVFIDRFLATAEAYRVPVILVFNKIDCYTQEDRLQLDRLSAVYTAIGYPCCHVSAITGEGLPDLKSLLDGKLTLLAGHSGVGKSSLINALIPHADLRTGAISQAHHTGMHTTTFSQMIDFPDLSPGSALIDTPGIKGFGTLEMGEYEVSHYFPEIFAASKGCRFGNCTHTHEPGCAVLEALRRGEIAESRYISYLSILEDENAERYRPEY</sequence>
<accession>P59946</accession>
<dbReference type="EC" id="3.6.1.-" evidence="1"/>
<dbReference type="EMBL" id="AE015924">
    <property type="protein sequence ID" value="AAQ66884.1"/>
    <property type="molecule type" value="Genomic_DNA"/>
</dbReference>
<dbReference type="RefSeq" id="WP_005874007.1">
    <property type="nucleotide sequence ID" value="NC_002950.2"/>
</dbReference>
<dbReference type="SMR" id="P59946"/>
<dbReference type="STRING" id="242619.PG_1900"/>
<dbReference type="EnsemblBacteria" id="AAQ66884">
    <property type="protein sequence ID" value="AAQ66884"/>
    <property type="gene ID" value="PG_1900"/>
</dbReference>
<dbReference type="KEGG" id="pgi:PG_1900"/>
<dbReference type="PATRIC" id="fig|242619.8.peg.1754"/>
<dbReference type="eggNOG" id="COG1162">
    <property type="taxonomic scope" value="Bacteria"/>
</dbReference>
<dbReference type="HOGENOM" id="CLU_033617_2_0_10"/>
<dbReference type="BioCyc" id="PGIN242619:G1G02-1771-MONOMER"/>
<dbReference type="Proteomes" id="UP000000588">
    <property type="component" value="Chromosome"/>
</dbReference>
<dbReference type="GO" id="GO:0005737">
    <property type="term" value="C:cytoplasm"/>
    <property type="evidence" value="ECO:0007669"/>
    <property type="project" value="UniProtKB-SubCell"/>
</dbReference>
<dbReference type="GO" id="GO:0005525">
    <property type="term" value="F:GTP binding"/>
    <property type="evidence" value="ECO:0007669"/>
    <property type="project" value="UniProtKB-UniRule"/>
</dbReference>
<dbReference type="GO" id="GO:0003924">
    <property type="term" value="F:GTPase activity"/>
    <property type="evidence" value="ECO:0007669"/>
    <property type="project" value="UniProtKB-UniRule"/>
</dbReference>
<dbReference type="GO" id="GO:0046872">
    <property type="term" value="F:metal ion binding"/>
    <property type="evidence" value="ECO:0007669"/>
    <property type="project" value="UniProtKB-KW"/>
</dbReference>
<dbReference type="GO" id="GO:0019843">
    <property type="term" value="F:rRNA binding"/>
    <property type="evidence" value="ECO:0007669"/>
    <property type="project" value="UniProtKB-KW"/>
</dbReference>
<dbReference type="GO" id="GO:0042274">
    <property type="term" value="P:ribosomal small subunit biogenesis"/>
    <property type="evidence" value="ECO:0007669"/>
    <property type="project" value="UniProtKB-UniRule"/>
</dbReference>
<dbReference type="CDD" id="cd04466">
    <property type="entry name" value="S1_YloQ_GTPase"/>
    <property type="match status" value="1"/>
</dbReference>
<dbReference type="CDD" id="cd01854">
    <property type="entry name" value="YjeQ_EngC"/>
    <property type="match status" value="1"/>
</dbReference>
<dbReference type="Gene3D" id="2.40.50.140">
    <property type="entry name" value="Nucleic acid-binding proteins"/>
    <property type="match status" value="1"/>
</dbReference>
<dbReference type="Gene3D" id="3.40.50.300">
    <property type="entry name" value="P-loop containing nucleotide triphosphate hydrolases"/>
    <property type="match status" value="1"/>
</dbReference>
<dbReference type="Gene3D" id="1.10.40.50">
    <property type="entry name" value="Probable gtpase engc, domain 3"/>
    <property type="match status" value="1"/>
</dbReference>
<dbReference type="HAMAP" id="MF_01820">
    <property type="entry name" value="GTPase_RsgA"/>
    <property type="match status" value="1"/>
</dbReference>
<dbReference type="InterPro" id="IPR030378">
    <property type="entry name" value="G_CP_dom"/>
</dbReference>
<dbReference type="InterPro" id="IPR012340">
    <property type="entry name" value="NA-bd_OB-fold"/>
</dbReference>
<dbReference type="InterPro" id="IPR027417">
    <property type="entry name" value="P-loop_NTPase"/>
</dbReference>
<dbReference type="InterPro" id="IPR004881">
    <property type="entry name" value="Ribosome_biogen_GTPase_RsgA"/>
</dbReference>
<dbReference type="InterPro" id="IPR010914">
    <property type="entry name" value="RsgA_GTPase_dom"/>
</dbReference>
<dbReference type="InterPro" id="IPR031944">
    <property type="entry name" value="RsgA_N"/>
</dbReference>
<dbReference type="NCBIfam" id="TIGR00157">
    <property type="entry name" value="ribosome small subunit-dependent GTPase A"/>
    <property type="match status" value="1"/>
</dbReference>
<dbReference type="PANTHER" id="PTHR32120">
    <property type="entry name" value="SMALL RIBOSOMAL SUBUNIT BIOGENESIS GTPASE RSGA"/>
    <property type="match status" value="1"/>
</dbReference>
<dbReference type="PANTHER" id="PTHR32120:SF11">
    <property type="entry name" value="SMALL RIBOSOMAL SUBUNIT BIOGENESIS GTPASE RSGA 1, MITOCHONDRIAL-RELATED"/>
    <property type="match status" value="1"/>
</dbReference>
<dbReference type="Pfam" id="PF03193">
    <property type="entry name" value="RsgA_GTPase"/>
    <property type="match status" value="1"/>
</dbReference>
<dbReference type="Pfam" id="PF16745">
    <property type="entry name" value="RsgA_N"/>
    <property type="match status" value="1"/>
</dbReference>
<dbReference type="SUPFAM" id="SSF50249">
    <property type="entry name" value="Nucleic acid-binding proteins"/>
    <property type="match status" value="1"/>
</dbReference>
<dbReference type="SUPFAM" id="SSF52540">
    <property type="entry name" value="P-loop containing nucleoside triphosphate hydrolases"/>
    <property type="match status" value="1"/>
</dbReference>
<dbReference type="PROSITE" id="PS50936">
    <property type="entry name" value="ENGC_GTPASE"/>
    <property type="match status" value="1"/>
</dbReference>
<dbReference type="PROSITE" id="PS51721">
    <property type="entry name" value="G_CP"/>
    <property type="match status" value="1"/>
</dbReference>
<comment type="function">
    <text evidence="1">One of several proteins that assist in the late maturation steps of the functional core of the 30S ribosomal subunit. Helps release RbfA from mature subunits. May play a role in the assembly of ribosomal proteins into the subunit. Circularly permuted GTPase that catalyzes slow GTP hydrolysis, GTPase activity is stimulated by the 30S ribosomal subunit.</text>
</comment>
<comment type="cofactor">
    <cofactor evidence="1">
        <name>Zn(2+)</name>
        <dbReference type="ChEBI" id="CHEBI:29105"/>
    </cofactor>
    <text evidence="1">Binds 1 zinc ion per subunit.</text>
</comment>
<comment type="subunit">
    <text evidence="1">Monomer. Associates with 30S ribosomal subunit, binds 16S rRNA.</text>
</comment>
<comment type="subcellular location">
    <subcellularLocation>
        <location evidence="1">Cytoplasm</location>
    </subcellularLocation>
</comment>
<comment type="similarity">
    <text evidence="1">Belongs to the TRAFAC class YlqF/YawG GTPase family. RsgA subfamily.</text>
</comment>
<protein>
    <recommendedName>
        <fullName evidence="1">Small ribosomal subunit biogenesis GTPase RsgA</fullName>
        <ecNumber evidence="1">3.6.1.-</ecNumber>
    </recommendedName>
</protein>
<feature type="chain" id="PRO_0000171508" description="Small ribosomal subunit biogenesis GTPase RsgA">
    <location>
        <begin position="1"/>
        <end position="315"/>
    </location>
</feature>
<feature type="domain" description="CP-type G" evidence="2">
    <location>
        <begin position="79"/>
        <end position="243"/>
    </location>
</feature>
<feature type="binding site" evidence="1">
    <location>
        <begin position="128"/>
        <end position="131"/>
    </location>
    <ligand>
        <name>GTP</name>
        <dbReference type="ChEBI" id="CHEBI:37565"/>
    </ligand>
</feature>
<feature type="binding site" evidence="1">
    <location>
        <begin position="182"/>
        <end position="190"/>
    </location>
    <ligand>
        <name>GTP</name>
        <dbReference type="ChEBI" id="CHEBI:37565"/>
    </ligand>
</feature>
<feature type="binding site" evidence="1">
    <location>
        <position position="267"/>
    </location>
    <ligand>
        <name>Zn(2+)</name>
        <dbReference type="ChEBI" id="CHEBI:29105"/>
    </ligand>
</feature>
<feature type="binding site" evidence="1">
    <location>
        <position position="272"/>
    </location>
    <ligand>
        <name>Zn(2+)</name>
        <dbReference type="ChEBI" id="CHEBI:29105"/>
    </ligand>
</feature>
<feature type="binding site" evidence="1">
    <location>
        <position position="274"/>
    </location>
    <ligand>
        <name>Zn(2+)</name>
        <dbReference type="ChEBI" id="CHEBI:29105"/>
    </ligand>
</feature>
<feature type="binding site" evidence="1">
    <location>
        <position position="280"/>
    </location>
    <ligand>
        <name>Zn(2+)</name>
        <dbReference type="ChEBI" id="CHEBI:29105"/>
    </ligand>
</feature>
<reference key="1">
    <citation type="journal article" date="2003" name="J. Bacteriol.">
        <title>Complete genome sequence of the oral pathogenic bacterium Porphyromonas gingivalis strain W83.</title>
        <authorList>
            <person name="Nelson K.E."/>
            <person name="Fleischmann R.D."/>
            <person name="DeBoy R.T."/>
            <person name="Paulsen I.T."/>
            <person name="Fouts D.E."/>
            <person name="Eisen J.A."/>
            <person name="Daugherty S.C."/>
            <person name="Dodson R.J."/>
            <person name="Durkin A.S."/>
            <person name="Gwinn M.L."/>
            <person name="Haft D.H."/>
            <person name="Kolonay J.F."/>
            <person name="Nelson W.C."/>
            <person name="Mason T.M."/>
            <person name="Tallon L."/>
            <person name="Gray J."/>
            <person name="Granger D."/>
            <person name="Tettelin H."/>
            <person name="Dong H."/>
            <person name="Galvin J.L."/>
            <person name="Duncan M.J."/>
            <person name="Dewhirst F.E."/>
            <person name="Fraser C.M."/>
        </authorList>
    </citation>
    <scope>NUCLEOTIDE SEQUENCE [LARGE SCALE GENOMIC DNA]</scope>
    <source>
        <strain>ATCC BAA-308 / W83</strain>
    </source>
</reference>
<keyword id="KW-0963">Cytoplasm</keyword>
<keyword id="KW-0342">GTP-binding</keyword>
<keyword id="KW-0378">Hydrolase</keyword>
<keyword id="KW-0479">Metal-binding</keyword>
<keyword id="KW-0547">Nucleotide-binding</keyword>
<keyword id="KW-1185">Reference proteome</keyword>
<keyword id="KW-0690">Ribosome biogenesis</keyword>
<keyword id="KW-0694">RNA-binding</keyword>
<keyword id="KW-0699">rRNA-binding</keyword>
<keyword id="KW-0862">Zinc</keyword>
<name>RSGA_PORGI</name>
<proteinExistence type="inferred from homology"/>